<keyword id="KW-0963">Cytoplasm</keyword>
<keyword id="KW-0664">Pyridoxine biosynthesis</keyword>
<keyword id="KW-0808">Transferase</keyword>
<reference key="1">
    <citation type="journal article" date="2008" name="Genome Res.">
        <title>Genome sequence of the beta-rhizobium Cupriavidus taiwanensis and comparative genomics of rhizobia.</title>
        <authorList>
            <person name="Amadou C."/>
            <person name="Pascal G."/>
            <person name="Mangenot S."/>
            <person name="Glew M."/>
            <person name="Bontemps C."/>
            <person name="Capela D."/>
            <person name="Carrere S."/>
            <person name="Cruveiller S."/>
            <person name="Dossat C."/>
            <person name="Lajus A."/>
            <person name="Marchetti M."/>
            <person name="Poinsot V."/>
            <person name="Rouy Z."/>
            <person name="Servin B."/>
            <person name="Saad M."/>
            <person name="Schenowitz C."/>
            <person name="Barbe V."/>
            <person name="Batut J."/>
            <person name="Medigue C."/>
            <person name="Masson-Boivin C."/>
        </authorList>
    </citation>
    <scope>NUCLEOTIDE SEQUENCE [LARGE SCALE GENOMIC DNA]</scope>
    <source>
        <strain>DSM 17343 / BCRC 17206 / CCUG 44338 / CIP 107171 / LMG 19424 / R1</strain>
    </source>
</reference>
<sequence length="260" mass="27767">MIFHANPGVIDLGVNIDHVATLRNARGTVYPDPIRAALLAEQAGADLITLHLREDRRHIRDADVRALRPQLATRMNLECAITQEMLDIACEIRPQDVCLVPERREEVTTEGGLDVAGRFELVKAACAQLAGAGIRVSLFIDPDADQIAAAAACGAPVIELHTGRYADAHTPAEQAAEFRRIADGADAGQKHGLVVNAGHGLHYTNVQPIAALPGIKELNIGHAIVAHAVFTGWENAVREMKAIMVAARLGTQYPAASTPA</sequence>
<protein>
    <recommendedName>
        <fullName evidence="1">Pyridoxine 5'-phosphate synthase</fullName>
        <shortName evidence="1">PNP synthase</shortName>
        <ecNumber evidence="1">2.6.99.2</ecNumber>
    </recommendedName>
</protein>
<proteinExistence type="inferred from homology"/>
<evidence type="ECO:0000255" key="1">
    <source>
        <dbReference type="HAMAP-Rule" id="MF_00279"/>
    </source>
</evidence>
<dbReference type="EC" id="2.6.99.2" evidence="1"/>
<dbReference type="EMBL" id="CU633749">
    <property type="protein sequence ID" value="CAQ69993.1"/>
    <property type="molecule type" value="Genomic_DNA"/>
</dbReference>
<dbReference type="RefSeq" id="WP_012353302.1">
    <property type="nucleotide sequence ID" value="NC_010528.1"/>
</dbReference>
<dbReference type="SMR" id="B3R1Z6"/>
<dbReference type="GeneID" id="29763081"/>
<dbReference type="KEGG" id="cti:RALTA_A2053"/>
<dbReference type="eggNOG" id="COG0854">
    <property type="taxonomic scope" value="Bacteria"/>
</dbReference>
<dbReference type="HOGENOM" id="CLU_074563_0_0_4"/>
<dbReference type="BioCyc" id="CTAI977880:RALTA_RS09970-MONOMER"/>
<dbReference type="UniPathway" id="UPA00244">
    <property type="reaction ID" value="UER00313"/>
</dbReference>
<dbReference type="Proteomes" id="UP000001692">
    <property type="component" value="Chromosome 1"/>
</dbReference>
<dbReference type="GO" id="GO:0005829">
    <property type="term" value="C:cytosol"/>
    <property type="evidence" value="ECO:0007669"/>
    <property type="project" value="TreeGrafter"/>
</dbReference>
<dbReference type="GO" id="GO:0033856">
    <property type="term" value="F:pyridoxine 5'-phosphate synthase activity"/>
    <property type="evidence" value="ECO:0007669"/>
    <property type="project" value="UniProtKB-EC"/>
</dbReference>
<dbReference type="GO" id="GO:0008615">
    <property type="term" value="P:pyridoxine biosynthetic process"/>
    <property type="evidence" value="ECO:0007669"/>
    <property type="project" value="UniProtKB-UniRule"/>
</dbReference>
<dbReference type="CDD" id="cd00003">
    <property type="entry name" value="PNPsynthase"/>
    <property type="match status" value="1"/>
</dbReference>
<dbReference type="FunFam" id="3.20.20.70:FF:000042">
    <property type="entry name" value="Pyridoxine 5'-phosphate synthase"/>
    <property type="match status" value="1"/>
</dbReference>
<dbReference type="Gene3D" id="3.20.20.70">
    <property type="entry name" value="Aldolase class I"/>
    <property type="match status" value="1"/>
</dbReference>
<dbReference type="HAMAP" id="MF_00279">
    <property type="entry name" value="PdxJ"/>
    <property type="match status" value="1"/>
</dbReference>
<dbReference type="InterPro" id="IPR013785">
    <property type="entry name" value="Aldolase_TIM"/>
</dbReference>
<dbReference type="InterPro" id="IPR004569">
    <property type="entry name" value="PyrdxlP_synth_PdxJ"/>
</dbReference>
<dbReference type="InterPro" id="IPR036130">
    <property type="entry name" value="Pyridoxine-5'_phos_synth"/>
</dbReference>
<dbReference type="NCBIfam" id="TIGR00559">
    <property type="entry name" value="pdxJ"/>
    <property type="match status" value="1"/>
</dbReference>
<dbReference type="NCBIfam" id="NF003623">
    <property type="entry name" value="PRK05265.1-1"/>
    <property type="match status" value="1"/>
</dbReference>
<dbReference type="NCBIfam" id="NF003624">
    <property type="entry name" value="PRK05265.1-2"/>
    <property type="match status" value="1"/>
</dbReference>
<dbReference type="NCBIfam" id="NF003625">
    <property type="entry name" value="PRK05265.1-3"/>
    <property type="match status" value="1"/>
</dbReference>
<dbReference type="NCBIfam" id="NF003627">
    <property type="entry name" value="PRK05265.1-5"/>
    <property type="match status" value="1"/>
</dbReference>
<dbReference type="PANTHER" id="PTHR30456">
    <property type="entry name" value="PYRIDOXINE 5'-PHOSPHATE SYNTHASE"/>
    <property type="match status" value="1"/>
</dbReference>
<dbReference type="PANTHER" id="PTHR30456:SF0">
    <property type="entry name" value="PYRIDOXINE 5'-PHOSPHATE SYNTHASE"/>
    <property type="match status" value="1"/>
</dbReference>
<dbReference type="Pfam" id="PF03740">
    <property type="entry name" value="PdxJ"/>
    <property type="match status" value="1"/>
</dbReference>
<dbReference type="SUPFAM" id="SSF63892">
    <property type="entry name" value="Pyridoxine 5'-phosphate synthase"/>
    <property type="match status" value="1"/>
</dbReference>
<feature type="chain" id="PRO_1000114805" description="Pyridoxine 5'-phosphate synthase">
    <location>
        <begin position="1"/>
        <end position="260"/>
    </location>
</feature>
<feature type="active site" description="Proton acceptor" evidence="1">
    <location>
        <position position="51"/>
    </location>
</feature>
<feature type="active site" description="Proton acceptor" evidence="1">
    <location>
        <position position="78"/>
    </location>
</feature>
<feature type="active site" description="Proton donor" evidence="1">
    <location>
        <position position="199"/>
    </location>
</feature>
<feature type="binding site" evidence="1">
    <location>
        <position position="15"/>
    </location>
    <ligand>
        <name>3-amino-2-oxopropyl phosphate</name>
        <dbReference type="ChEBI" id="CHEBI:57279"/>
    </ligand>
</feature>
<feature type="binding site" evidence="1">
    <location>
        <begin position="17"/>
        <end position="18"/>
    </location>
    <ligand>
        <name>1-deoxy-D-xylulose 5-phosphate</name>
        <dbReference type="ChEBI" id="CHEBI:57792"/>
    </ligand>
</feature>
<feature type="binding site" evidence="1">
    <location>
        <position position="26"/>
    </location>
    <ligand>
        <name>3-amino-2-oxopropyl phosphate</name>
        <dbReference type="ChEBI" id="CHEBI:57279"/>
    </ligand>
</feature>
<feature type="binding site" evidence="1">
    <location>
        <position position="53"/>
    </location>
    <ligand>
        <name>1-deoxy-D-xylulose 5-phosphate</name>
        <dbReference type="ChEBI" id="CHEBI:57792"/>
    </ligand>
</feature>
<feature type="binding site" evidence="1">
    <location>
        <position position="58"/>
    </location>
    <ligand>
        <name>1-deoxy-D-xylulose 5-phosphate</name>
        <dbReference type="ChEBI" id="CHEBI:57792"/>
    </ligand>
</feature>
<feature type="binding site" evidence="1">
    <location>
        <position position="108"/>
    </location>
    <ligand>
        <name>1-deoxy-D-xylulose 5-phosphate</name>
        <dbReference type="ChEBI" id="CHEBI:57792"/>
    </ligand>
</feature>
<feature type="binding site" evidence="1">
    <location>
        <position position="200"/>
    </location>
    <ligand>
        <name>3-amino-2-oxopropyl phosphate</name>
        <dbReference type="ChEBI" id="CHEBI:57279"/>
    </ligand>
</feature>
<feature type="binding site" evidence="1">
    <location>
        <begin position="221"/>
        <end position="222"/>
    </location>
    <ligand>
        <name>3-amino-2-oxopropyl phosphate</name>
        <dbReference type="ChEBI" id="CHEBI:57279"/>
    </ligand>
</feature>
<feature type="site" description="Transition state stabilizer" evidence="1">
    <location>
        <position position="159"/>
    </location>
</feature>
<organism>
    <name type="scientific">Cupriavidus taiwanensis (strain DSM 17343 / BCRC 17206 / CCUG 44338 / CIP 107171 / LMG 19424 / R1)</name>
    <name type="common">Ralstonia taiwanensis (strain LMG 19424)</name>
    <dbReference type="NCBI Taxonomy" id="977880"/>
    <lineage>
        <taxon>Bacteria</taxon>
        <taxon>Pseudomonadati</taxon>
        <taxon>Pseudomonadota</taxon>
        <taxon>Betaproteobacteria</taxon>
        <taxon>Burkholderiales</taxon>
        <taxon>Burkholderiaceae</taxon>
        <taxon>Cupriavidus</taxon>
    </lineage>
</organism>
<comment type="function">
    <text evidence="1">Catalyzes the complicated ring closure reaction between the two acyclic compounds 1-deoxy-D-xylulose-5-phosphate (DXP) and 3-amino-2-oxopropyl phosphate (1-amino-acetone-3-phosphate or AAP) to form pyridoxine 5'-phosphate (PNP) and inorganic phosphate.</text>
</comment>
<comment type="catalytic activity">
    <reaction evidence="1">
        <text>3-amino-2-oxopropyl phosphate + 1-deoxy-D-xylulose 5-phosphate = pyridoxine 5'-phosphate + phosphate + 2 H2O + H(+)</text>
        <dbReference type="Rhea" id="RHEA:15265"/>
        <dbReference type="ChEBI" id="CHEBI:15377"/>
        <dbReference type="ChEBI" id="CHEBI:15378"/>
        <dbReference type="ChEBI" id="CHEBI:43474"/>
        <dbReference type="ChEBI" id="CHEBI:57279"/>
        <dbReference type="ChEBI" id="CHEBI:57792"/>
        <dbReference type="ChEBI" id="CHEBI:58589"/>
        <dbReference type="EC" id="2.6.99.2"/>
    </reaction>
</comment>
<comment type="pathway">
    <text evidence="1">Cofactor biosynthesis; pyridoxine 5'-phosphate biosynthesis; pyridoxine 5'-phosphate from D-erythrose 4-phosphate: step 5/5.</text>
</comment>
<comment type="subunit">
    <text evidence="1">Homooctamer; tetramer of dimers.</text>
</comment>
<comment type="subcellular location">
    <subcellularLocation>
        <location evidence="1">Cytoplasm</location>
    </subcellularLocation>
</comment>
<comment type="similarity">
    <text evidence="1">Belongs to the PNP synthase family.</text>
</comment>
<name>PDXJ_CUPTR</name>
<gene>
    <name evidence="1" type="primary">pdxJ</name>
    <name type="ordered locus">RALTA_A2053</name>
</gene>
<accession>B3R1Z6</accession>